<name>RADA_STRPQ</name>
<dbReference type="EC" id="3.6.4.-" evidence="1"/>
<dbReference type="EMBL" id="BA000034">
    <property type="protein sequence ID" value="BAC63269.1"/>
    <property type="molecule type" value="Genomic_DNA"/>
</dbReference>
<dbReference type="RefSeq" id="WP_011054159.1">
    <property type="nucleotide sequence ID" value="NC_004606.1"/>
</dbReference>
<dbReference type="SMR" id="P0DD79"/>
<dbReference type="MEROPS" id="S16.A04"/>
<dbReference type="KEGG" id="sps:SPs0174"/>
<dbReference type="HOGENOM" id="CLU_018264_0_1_9"/>
<dbReference type="GO" id="GO:0005829">
    <property type="term" value="C:cytosol"/>
    <property type="evidence" value="ECO:0007669"/>
    <property type="project" value="TreeGrafter"/>
</dbReference>
<dbReference type="GO" id="GO:0005524">
    <property type="term" value="F:ATP binding"/>
    <property type="evidence" value="ECO:0007669"/>
    <property type="project" value="UniProtKB-UniRule"/>
</dbReference>
<dbReference type="GO" id="GO:0016887">
    <property type="term" value="F:ATP hydrolysis activity"/>
    <property type="evidence" value="ECO:0007669"/>
    <property type="project" value="InterPro"/>
</dbReference>
<dbReference type="GO" id="GO:0140664">
    <property type="term" value="F:ATP-dependent DNA damage sensor activity"/>
    <property type="evidence" value="ECO:0007669"/>
    <property type="project" value="InterPro"/>
</dbReference>
<dbReference type="GO" id="GO:0003684">
    <property type="term" value="F:damaged DNA binding"/>
    <property type="evidence" value="ECO:0007669"/>
    <property type="project" value="InterPro"/>
</dbReference>
<dbReference type="GO" id="GO:0008270">
    <property type="term" value="F:zinc ion binding"/>
    <property type="evidence" value="ECO:0007669"/>
    <property type="project" value="UniProtKB-KW"/>
</dbReference>
<dbReference type="GO" id="GO:0000725">
    <property type="term" value="P:recombinational repair"/>
    <property type="evidence" value="ECO:0007669"/>
    <property type="project" value="UniProtKB-UniRule"/>
</dbReference>
<dbReference type="CDD" id="cd01121">
    <property type="entry name" value="RadA_SMS_N"/>
    <property type="match status" value="1"/>
</dbReference>
<dbReference type="FunFam" id="3.30.230.10:FF:000031">
    <property type="entry name" value="DNA repair protein RadA"/>
    <property type="match status" value="1"/>
</dbReference>
<dbReference type="FunFam" id="3.40.50.300:FF:000050">
    <property type="entry name" value="DNA repair protein RadA"/>
    <property type="match status" value="1"/>
</dbReference>
<dbReference type="Gene3D" id="3.30.230.10">
    <property type="match status" value="1"/>
</dbReference>
<dbReference type="Gene3D" id="3.40.50.300">
    <property type="entry name" value="P-loop containing nucleotide triphosphate hydrolases"/>
    <property type="match status" value="1"/>
</dbReference>
<dbReference type="HAMAP" id="MF_01498">
    <property type="entry name" value="RadA_bact"/>
    <property type="match status" value="1"/>
</dbReference>
<dbReference type="InterPro" id="IPR003593">
    <property type="entry name" value="AAA+_ATPase"/>
</dbReference>
<dbReference type="InterPro" id="IPR004504">
    <property type="entry name" value="DNA_repair_RadA"/>
</dbReference>
<dbReference type="InterPro" id="IPR027417">
    <property type="entry name" value="P-loop_NTPase"/>
</dbReference>
<dbReference type="InterPro" id="IPR020588">
    <property type="entry name" value="RecA_ATP-bd"/>
</dbReference>
<dbReference type="InterPro" id="IPR020568">
    <property type="entry name" value="Ribosomal_Su5_D2-typ_SF"/>
</dbReference>
<dbReference type="InterPro" id="IPR014721">
    <property type="entry name" value="Ribsml_uS5_D2-typ_fold_subgr"/>
</dbReference>
<dbReference type="InterPro" id="IPR041166">
    <property type="entry name" value="Rubredoxin_2"/>
</dbReference>
<dbReference type="NCBIfam" id="TIGR00416">
    <property type="entry name" value="sms"/>
    <property type="match status" value="1"/>
</dbReference>
<dbReference type="PANTHER" id="PTHR32472">
    <property type="entry name" value="DNA REPAIR PROTEIN RADA"/>
    <property type="match status" value="1"/>
</dbReference>
<dbReference type="PANTHER" id="PTHR32472:SF10">
    <property type="entry name" value="DNA REPAIR PROTEIN RADA-LIKE PROTEIN"/>
    <property type="match status" value="1"/>
</dbReference>
<dbReference type="Pfam" id="PF13481">
    <property type="entry name" value="AAA_25"/>
    <property type="match status" value="1"/>
</dbReference>
<dbReference type="Pfam" id="PF13541">
    <property type="entry name" value="ChlI"/>
    <property type="match status" value="1"/>
</dbReference>
<dbReference type="Pfam" id="PF18073">
    <property type="entry name" value="Zn_ribbon_LapB"/>
    <property type="match status" value="1"/>
</dbReference>
<dbReference type="PRINTS" id="PR01874">
    <property type="entry name" value="DNAREPAIRADA"/>
</dbReference>
<dbReference type="SMART" id="SM00382">
    <property type="entry name" value="AAA"/>
    <property type="match status" value="1"/>
</dbReference>
<dbReference type="SUPFAM" id="SSF52540">
    <property type="entry name" value="P-loop containing nucleoside triphosphate hydrolases"/>
    <property type="match status" value="1"/>
</dbReference>
<dbReference type="SUPFAM" id="SSF54211">
    <property type="entry name" value="Ribosomal protein S5 domain 2-like"/>
    <property type="match status" value="1"/>
</dbReference>
<dbReference type="PROSITE" id="PS50162">
    <property type="entry name" value="RECA_2"/>
    <property type="match status" value="1"/>
</dbReference>
<sequence>MAKKKATFICQECGYQSPKYLGRCPNCSAWSSFVEEVEVKEVKNARVSLAGEKSRPVKLKDVDNISYHRTQTDMSEFNRVLGGGVVPGSLILIGGDPGIGKSTLLLQVSTQLANKGTVLYASGEESAEQIKLRSERLGDIDNEFYLYAETNMQAIRTEIENIKPDFLIIDSIQTIMSPDITGVQGSVSQVREVTAELMQLAKTNNIATFIVGHVTKEGTLAGPRMLEHMVDTVLYFEGERHHTFRILRAVKNRFGSTNEIGIFEMQSGGLVEVLNPSQVFLEERLDGATGSAVVVTMEGSRPILAEVQSLVTPTVFGNARRTTTGLDFNRVSLIMAVLEKRCGLLLQNQDAYLKSAGGVKLDEPAIDLAVAVAIASSYKEKPTSPQEAFLGEIGLTGEIRRVTRIEQRINEAAKLGFTKVYAPKNALQGIDISQGIEVVGVTTVGQVLKAVFS</sequence>
<proteinExistence type="inferred from homology"/>
<evidence type="ECO:0000255" key="1">
    <source>
        <dbReference type="HAMAP-Rule" id="MF_01498"/>
    </source>
</evidence>
<reference key="1">
    <citation type="journal article" date="2003" name="Genome Res.">
        <title>Genome sequence of an M3 strain of Streptococcus pyogenes reveals a large-scale genomic rearrangement in invasive strains and new insights into phage evolution.</title>
        <authorList>
            <person name="Nakagawa I."/>
            <person name="Kurokawa K."/>
            <person name="Yamashita A."/>
            <person name="Nakata M."/>
            <person name="Tomiyasu Y."/>
            <person name="Okahashi N."/>
            <person name="Kawabata S."/>
            <person name="Yamazaki K."/>
            <person name="Shiba T."/>
            <person name="Yasunaga T."/>
            <person name="Hayashi H."/>
            <person name="Hattori M."/>
            <person name="Hamada S."/>
        </authorList>
    </citation>
    <scope>NUCLEOTIDE SEQUENCE [LARGE SCALE GENOMIC DNA]</scope>
    <source>
        <strain>SSI-1</strain>
    </source>
</reference>
<gene>
    <name evidence="1" type="primary">radA</name>
    <name type="ordered locus">SPs0174</name>
</gene>
<keyword id="KW-0067">ATP-binding</keyword>
<keyword id="KW-0227">DNA damage</keyword>
<keyword id="KW-0234">DNA repair</keyword>
<keyword id="KW-0238">DNA-binding</keyword>
<keyword id="KW-0378">Hydrolase</keyword>
<keyword id="KW-0479">Metal-binding</keyword>
<keyword id="KW-0547">Nucleotide-binding</keyword>
<keyword id="KW-0346">Stress response</keyword>
<keyword id="KW-0862">Zinc</keyword>
<keyword id="KW-0863">Zinc-finger</keyword>
<comment type="function">
    <text evidence="1">DNA-dependent ATPase involved in processing of recombination intermediates, plays a role in repairing DNA breaks. Stimulates the branch migration of RecA-mediated strand transfer reactions, allowing the 3' invading strand to extend heteroduplex DNA faster. Binds ssDNA in the presence of ADP but not other nucleotides, has ATPase activity that is stimulated by ssDNA and various branched DNA structures, but inhibited by SSB. Does not have RecA's homology-searching function.</text>
</comment>
<comment type="domain">
    <text evidence="1">Has a putative N-terminal zinc-finger, a middle region with homology to RecA with ATPase motifs including the RadA KNRFG motif, while the C-terminus is homologous to Lon protease.</text>
</comment>
<comment type="similarity">
    <text evidence="1">Belongs to the RecA family. RadA subfamily.</text>
</comment>
<protein>
    <recommendedName>
        <fullName evidence="1">DNA repair protein RadA</fullName>
        <ecNumber evidence="1">3.6.4.-</ecNumber>
    </recommendedName>
    <alternativeName>
        <fullName evidence="1">Branch migration protein RadA</fullName>
    </alternativeName>
</protein>
<feature type="chain" id="PRO_0000411479" description="DNA repair protein RadA">
    <location>
        <begin position="1"/>
        <end position="453"/>
    </location>
</feature>
<feature type="zinc finger region" description="C4-type" evidence="1">
    <location>
        <begin position="10"/>
        <end position="27"/>
    </location>
</feature>
<feature type="region of interest" description="Lon-protease-like" evidence="1">
    <location>
        <begin position="350"/>
        <end position="453"/>
    </location>
</feature>
<feature type="short sequence motif" description="RadA KNRFG motif" evidence="1">
    <location>
        <begin position="251"/>
        <end position="255"/>
    </location>
</feature>
<feature type="binding site" evidence="1">
    <location>
        <begin position="95"/>
        <end position="102"/>
    </location>
    <ligand>
        <name>ATP</name>
        <dbReference type="ChEBI" id="CHEBI:30616"/>
    </ligand>
</feature>
<organism>
    <name type="scientific">Streptococcus pyogenes serotype M3 (strain SSI-1)</name>
    <dbReference type="NCBI Taxonomy" id="193567"/>
    <lineage>
        <taxon>Bacteria</taxon>
        <taxon>Bacillati</taxon>
        <taxon>Bacillota</taxon>
        <taxon>Bacilli</taxon>
        <taxon>Lactobacillales</taxon>
        <taxon>Streptococcaceae</taxon>
        <taxon>Streptococcus</taxon>
    </lineage>
</organism>
<accession>P0DD79</accession>
<accession>Q79YK3</accession>
<accession>Q8K8Q1</accession>